<organism>
    <name type="scientific">Mycobacterium tuberculosis (strain ATCC 25618 / H37Rv)</name>
    <dbReference type="NCBI Taxonomy" id="83332"/>
    <lineage>
        <taxon>Bacteria</taxon>
        <taxon>Bacillati</taxon>
        <taxon>Actinomycetota</taxon>
        <taxon>Actinomycetes</taxon>
        <taxon>Mycobacteriales</taxon>
        <taxon>Mycobacteriaceae</taxon>
        <taxon>Mycobacterium</taxon>
        <taxon>Mycobacterium tuberculosis complex</taxon>
    </lineage>
</organism>
<gene>
    <name type="primary">whiB6</name>
    <name type="ordered locus">Rv3862c</name>
</gene>
<reference key="1">
    <citation type="journal article" date="1998" name="Nature">
        <title>Deciphering the biology of Mycobacterium tuberculosis from the complete genome sequence.</title>
        <authorList>
            <person name="Cole S.T."/>
            <person name="Brosch R."/>
            <person name="Parkhill J."/>
            <person name="Garnier T."/>
            <person name="Churcher C.M."/>
            <person name="Harris D.E."/>
            <person name="Gordon S.V."/>
            <person name="Eiglmeier K."/>
            <person name="Gas S."/>
            <person name="Barry C.E. III"/>
            <person name="Tekaia F."/>
            <person name="Badcock K."/>
            <person name="Basham D."/>
            <person name="Brown D."/>
            <person name="Chillingworth T."/>
            <person name="Connor R."/>
            <person name="Davies R.M."/>
            <person name="Devlin K."/>
            <person name="Feltwell T."/>
            <person name="Gentles S."/>
            <person name="Hamlin N."/>
            <person name="Holroyd S."/>
            <person name="Hornsby T."/>
            <person name="Jagels K."/>
            <person name="Krogh A."/>
            <person name="McLean J."/>
            <person name="Moule S."/>
            <person name="Murphy L.D."/>
            <person name="Oliver S."/>
            <person name="Osborne J."/>
            <person name="Quail M.A."/>
            <person name="Rajandream M.A."/>
            <person name="Rogers J."/>
            <person name="Rutter S."/>
            <person name="Seeger K."/>
            <person name="Skelton S."/>
            <person name="Squares S."/>
            <person name="Squares R."/>
            <person name="Sulston J.E."/>
            <person name="Taylor K."/>
            <person name="Whitehead S."/>
            <person name="Barrell B.G."/>
        </authorList>
    </citation>
    <scope>NUCLEOTIDE SEQUENCE [LARGE SCALE GENOMIC DNA]</scope>
    <source>
        <strain>ATCC 25618 / H37Rv</strain>
    </source>
</reference>
<reference key="2">
    <citation type="journal article" date="2009" name="FEBS J.">
        <title>Studies on structural and functional divergence among seven WhiB proteins of Mycobacterium tuberculosis H37Rv.</title>
        <authorList>
            <person name="Alam M.S."/>
            <person name="Garg S.K."/>
            <person name="Agrawal P."/>
        </authorList>
    </citation>
    <scope>FUNCTION AS A PROTEIN DISULFIDE REDUCTASE</scope>
    <scope>COFACTOR</scope>
    <scope>MASS SPECTROMETRY</scope>
    <scope>DISULFIDE BOND</scope>
    <source>
        <strain>ATCC 25618 / H37Rv</strain>
    </source>
</reference>
<reference key="3">
    <citation type="journal article" date="2012" name="Mol. Microbiol.">
        <title>Mycobacterium tuberculosis WhiB4 regulates oxidative stress response to modulate survival and dissemination in vivo.</title>
        <authorList>
            <person name="Chawla M."/>
            <person name="Parikh P."/>
            <person name="Saxena A."/>
            <person name="Munshi M."/>
            <person name="Mehta M."/>
            <person name="Mai D."/>
            <person name="Srivastava A.K."/>
            <person name="Narasimhulu K.V."/>
            <person name="Redding K.E."/>
            <person name="Vashi N."/>
            <person name="Kumar D."/>
            <person name="Steyn A.J."/>
            <person name="Singh A."/>
        </authorList>
    </citation>
    <scope>INDUCTION</scope>
    <source>
        <strain>ATCC 25618 / H37Rv</strain>
    </source>
</reference>
<protein>
    <recommendedName>
        <fullName>Probable transcriptional regulator WhiB6</fullName>
    </recommendedName>
</protein>
<dbReference type="EMBL" id="AL123456">
    <property type="protein sequence ID" value="CCP46691.1"/>
    <property type="molecule type" value="Genomic_DNA"/>
</dbReference>
<dbReference type="PIR" id="C70656">
    <property type="entry name" value="C70656"/>
</dbReference>
<dbReference type="RefSeq" id="NP_218379.1">
    <property type="nucleotide sequence ID" value="NC_000962.3"/>
</dbReference>
<dbReference type="RefSeq" id="WP_003899734.1">
    <property type="nucleotide sequence ID" value="NZ_NVQJ01000057.1"/>
</dbReference>
<dbReference type="PDB" id="8D5V">
    <property type="method" value="X-ray"/>
    <property type="resolution" value="1.80 A"/>
    <property type="chains" value="A/C=1-116"/>
</dbReference>
<dbReference type="PDBsum" id="8D5V"/>
<dbReference type="SMR" id="P9WF37"/>
<dbReference type="STRING" id="83332.Rv3862c"/>
<dbReference type="PaxDb" id="83332-Rv3862c"/>
<dbReference type="DNASU" id="886190"/>
<dbReference type="GeneID" id="45427866"/>
<dbReference type="GeneID" id="886190"/>
<dbReference type="KEGG" id="mtu:Rv3862c"/>
<dbReference type="KEGG" id="mtv:RVBD_3862c"/>
<dbReference type="PATRIC" id="fig|83332.12.peg.4307"/>
<dbReference type="TubercuList" id="Rv3862c"/>
<dbReference type="eggNOG" id="ENOG5031A0R">
    <property type="taxonomic scope" value="Bacteria"/>
</dbReference>
<dbReference type="InParanoid" id="P9WF37"/>
<dbReference type="OrthoDB" id="4379056at2"/>
<dbReference type="Proteomes" id="UP000001584">
    <property type="component" value="Chromosome"/>
</dbReference>
<dbReference type="GO" id="GO:0005737">
    <property type="term" value="C:cytoplasm"/>
    <property type="evidence" value="ECO:0007669"/>
    <property type="project" value="UniProtKB-SubCell"/>
</dbReference>
<dbReference type="GO" id="GO:0051539">
    <property type="term" value="F:4 iron, 4 sulfur cluster binding"/>
    <property type="evidence" value="ECO:0007669"/>
    <property type="project" value="UniProtKB-UniRule"/>
</dbReference>
<dbReference type="GO" id="GO:0035731">
    <property type="term" value="F:dinitrosyl-iron complex binding"/>
    <property type="evidence" value="ECO:0007669"/>
    <property type="project" value="UniProtKB-UniRule"/>
</dbReference>
<dbReference type="GO" id="GO:0003677">
    <property type="term" value="F:DNA binding"/>
    <property type="evidence" value="ECO:0007669"/>
    <property type="project" value="UniProtKB-UniRule"/>
</dbReference>
<dbReference type="GO" id="GO:0046872">
    <property type="term" value="F:metal ion binding"/>
    <property type="evidence" value="ECO:0007669"/>
    <property type="project" value="UniProtKB-KW"/>
</dbReference>
<dbReference type="GO" id="GO:0006355">
    <property type="term" value="P:regulation of DNA-templated transcription"/>
    <property type="evidence" value="ECO:0007669"/>
    <property type="project" value="UniProtKB-UniRule"/>
</dbReference>
<dbReference type="HAMAP" id="MF_01479">
    <property type="entry name" value="WhiB"/>
    <property type="match status" value="1"/>
</dbReference>
<dbReference type="InterPro" id="IPR034768">
    <property type="entry name" value="4FE4S_WBL"/>
</dbReference>
<dbReference type="InterPro" id="IPR003482">
    <property type="entry name" value="Whib"/>
</dbReference>
<dbReference type="Pfam" id="PF02467">
    <property type="entry name" value="Whib"/>
    <property type="match status" value="1"/>
</dbReference>
<dbReference type="PROSITE" id="PS51674">
    <property type="entry name" value="4FE4S_WBL"/>
    <property type="match status" value="1"/>
</dbReference>
<sequence length="116" mass="12792">MRYAFAAEATTCNAFWRNVDMTVTALYEVPLGVCTQDPDRWTTTPDDEAKTLCRACPRRWLCARDAVESAGAEGLWAGVVIPESGRARAFALGQLRSLAERNGYPVRDHRVSAQSA</sequence>
<comment type="function">
    <text evidence="1 2">Acts as a transcriptional regulator. Probably redox-responsive. The apo- but not holo-form probably binds DNA (By similarity). The apo-form has been shown to act as a protein disulfide reductase.</text>
</comment>
<comment type="cofactor">
    <cofactor evidence="1 4">
        <name>[4Fe-4S] cluster</name>
        <dbReference type="ChEBI" id="CHEBI:49883"/>
    </cofactor>
    <text evidence="1 4">Binds 1 [4Fe-4S] cluster per subunit. Contains 1 [2Fe-2S] cluster after reconstitution of overexpressed protein from E.coli. Following nitrosylation of the [4Fe-4S] cluster binds 1 [4Fe-8(NO)] cluster per subunit.</text>
</comment>
<comment type="subcellular location">
    <subcellularLocation>
        <location evidence="1">Cytoplasm</location>
    </subcellularLocation>
</comment>
<comment type="induction">
    <text evidence="3">Weakly expressed in exponential phase, more induced upon entry into stationary phase. 3-fold induced by streptomycin and pH 4.5, 4-fold by ethanol. Slightly induced during entry into hypoxia, by cAMP, in macrophage infection and 5-fold induced by NO. Repressed by WhiB4.</text>
</comment>
<comment type="PTM">
    <text evidence="1">The Fe-S cluster can be nitrosylated by nitric oxide (NO).</text>
</comment>
<comment type="PTM">
    <text>Upon Fe-S cluster removal intramolecular disulfide bonds are formed.</text>
</comment>
<comment type="mass spectrometry" mass="17670.02" method="MALDI" evidence="2">
    <text>Fully oxidized recombinant protein tagged at both termini.</text>
</comment>
<comment type="mass spectrometry" mass="17902.9" method="MALDI" evidence="2">
    <text>Fully reduced recombinant protein tagged at both termini.</text>
</comment>
<comment type="similarity">
    <text evidence="4">Belongs to the WhiB family.</text>
</comment>
<accession>P9WF37</accession>
<accession>F2GDM3</accession>
<accession>L0TGU1</accession>
<accession>P96215</accession>
<accession>Q7D4Q1</accession>
<evidence type="ECO:0000250" key="1"/>
<evidence type="ECO:0000269" key="2">
    <source>
    </source>
</evidence>
<evidence type="ECO:0000269" key="3">
    <source>
    </source>
</evidence>
<evidence type="ECO:0000305" key="4"/>
<evidence type="ECO:0007829" key="5">
    <source>
        <dbReference type="PDB" id="8D5V"/>
    </source>
</evidence>
<keyword id="KW-0002">3D-structure</keyword>
<keyword id="KW-0004">4Fe-4S</keyword>
<keyword id="KW-0963">Cytoplasm</keyword>
<keyword id="KW-1015">Disulfide bond</keyword>
<keyword id="KW-0238">DNA-binding</keyword>
<keyword id="KW-0408">Iron</keyword>
<keyword id="KW-0411">Iron-sulfur</keyword>
<keyword id="KW-0479">Metal-binding</keyword>
<keyword id="KW-1185">Reference proteome</keyword>
<keyword id="KW-0804">Transcription</keyword>
<keyword id="KW-0805">Transcription regulation</keyword>
<feature type="chain" id="PRO_0000420386" description="Probable transcriptional regulator WhiB6">
    <location>
        <begin position="1"/>
        <end position="116"/>
    </location>
</feature>
<feature type="domain" description="4Fe-4S Wbl-type">
    <location>
        <begin position="33"/>
        <end position="86"/>
    </location>
</feature>
<feature type="binding site" evidence="1">
    <location>
        <position position="12"/>
    </location>
    <ligand>
        <name>[4Fe-4S] cluster</name>
        <dbReference type="ChEBI" id="CHEBI:49883"/>
    </ligand>
</feature>
<feature type="binding site" evidence="1">
    <location>
        <position position="53"/>
    </location>
    <ligand>
        <name>[4Fe-4S] cluster</name>
        <dbReference type="ChEBI" id="CHEBI:49883"/>
    </ligand>
</feature>
<feature type="binding site" evidence="1">
    <location>
        <position position="56"/>
    </location>
    <ligand>
        <name>[4Fe-4S] cluster</name>
        <dbReference type="ChEBI" id="CHEBI:49883"/>
    </ligand>
</feature>
<feature type="binding site" evidence="1">
    <location>
        <position position="62"/>
    </location>
    <ligand>
        <name>[4Fe-4S] cluster</name>
        <dbReference type="ChEBI" id="CHEBI:49883"/>
    </ligand>
</feature>
<feature type="helix" evidence="5">
    <location>
        <begin position="33"/>
        <end position="35"/>
    </location>
</feature>
<feature type="helix" evidence="5">
    <location>
        <begin position="39"/>
        <end position="42"/>
    </location>
</feature>
<feature type="helix" evidence="5">
    <location>
        <begin position="47"/>
        <end position="54"/>
    </location>
</feature>
<feature type="helix" evidence="5">
    <location>
        <begin position="59"/>
        <end position="68"/>
    </location>
</feature>
<feature type="strand" evidence="5">
    <location>
        <begin position="74"/>
        <end position="76"/>
    </location>
</feature>
<feature type="strand" evidence="5">
    <location>
        <begin position="79"/>
        <end position="81"/>
    </location>
</feature>
<feature type="helix" evidence="5">
    <location>
        <begin position="85"/>
        <end position="101"/>
    </location>
</feature>
<feature type="helix" evidence="5">
    <location>
        <begin position="108"/>
        <end position="110"/>
    </location>
</feature>
<name>WHIB6_MYCTU</name>
<proteinExistence type="evidence at protein level"/>